<feature type="chain" id="PRO_0000454301" description="Tryptophan prenyltransferase ComQ">
    <location>
        <begin position="1"/>
        <end position="315"/>
    </location>
</feature>
<feature type="binding site" evidence="2">
    <location>
        <position position="95"/>
    </location>
    <ligand>
        <name>Mg(2+)</name>
        <dbReference type="ChEBI" id="CHEBI:18420"/>
        <label>1</label>
    </ligand>
</feature>
<feature type="binding site" evidence="2">
    <location>
        <position position="95"/>
    </location>
    <ligand>
        <name>Mg(2+)</name>
        <dbReference type="ChEBI" id="CHEBI:18420"/>
        <label>2</label>
    </ligand>
</feature>
<feature type="binding site" evidence="2">
    <location>
        <position position="99"/>
    </location>
    <ligand>
        <name>Mg(2+)</name>
        <dbReference type="ChEBI" id="CHEBI:18420"/>
        <label>1</label>
    </ligand>
</feature>
<feature type="binding site" evidence="2">
    <location>
        <position position="99"/>
    </location>
    <ligand>
        <name>Mg(2+)</name>
        <dbReference type="ChEBI" id="CHEBI:18420"/>
        <label>2</label>
    </ligand>
</feature>
<reference key="1">
    <citation type="journal article" date="2010" name="BMC Genomics">
        <title>Whole genome assembly of a natto production strain Bacillus subtilis natto from very short read data.</title>
        <authorList>
            <person name="Nishito Y."/>
            <person name="Osana Y."/>
            <person name="Hachiya T."/>
            <person name="Popendorf K."/>
            <person name="Toyoda A."/>
            <person name="Fujiyama A."/>
            <person name="Itaya M."/>
            <person name="Sakakibara Y."/>
        </authorList>
    </citation>
    <scope>NUCLEOTIDE SEQUENCE [LARGE SCALE GENOMIC DNA]</scope>
    <source>
        <strain>BEST195</strain>
    </source>
</reference>
<reference key="2">
    <citation type="journal article" date="2014" name="PLoS ONE">
        <title>Whole genome complete resequencing of Bacillus subtilis natto by combining long reads with high-quality short reads.</title>
        <authorList>
            <person name="Kamada M."/>
            <person name="Hase S."/>
            <person name="Sato K."/>
            <person name="Toyoda A."/>
            <person name="Fujiyama A."/>
            <person name="Sakakibara Y."/>
        </authorList>
    </citation>
    <scope>GENOME REANNOTATION</scope>
    <source>
        <strain>BEST195</strain>
    </source>
</reference>
<reference key="3">
    <citation type="journal article" date="2015" name="Biosci. Biotechnol. Biochem.">
        <title>Identification of a quorum sensing pheromone posttranslationally farnesylated at the internal tryptophan residue from Bacillus subtilis subsp. natto.</title>
        <authorList>
            <person name="Hayashi S."/>
            <person name="Usami S."/>
            <person name="Nakamura Y."/>
            <person name="Ozaki K."/>
            <person name="Okada M."/>
        </authorList>
    </citation>
    <scope>FUNCTION</scope>
</reference>
<reference key="4">
    <citation type="journal article" date="2018" name="ChemBioChem">
        <title>A tryptophan prenyltransferase with broad substrate tolerance from Bacillus subtilis subsp. natto.</title>
        <authorList>
            <person name="Sugita T."/>
            <person name="Okada M."/>
            <person name="Nakashima Y."/>
            <person name="Tian T."/>
            <person name="Abe I."/>
        </authorList>
    </citation>
    <scope>FUNCTION</scope>
    <scope>CATALYTIC ACTIVITY</scope>
    <scope>COFACTOR</scope>
    <scope>BIOPHYSICOCHEMICAL PROPERTIES</scope>
</reference>
<keyword id="KW-1003">Cell membrane</keyword>
<keyword id="KW-0178">Competence</keyword>
<keyword id="KW-0460">Magnesium</keyword>
<keyword id="KW-0472">Membrane</keyword>
<keyword id="KW-0479">Metal-binding</keyword>
<keyword id="KW-0637">Prenyltransferase</keyword>
<keyword id="KW-0808">Transferase</keyword>
<comment type="function">
    <text evidence="3 4">Part of a major quorum-sensing system that regulates the development of genetic competence (PubMed:25855042, PubMed:29665236). Involved in the maturation of the competence pheromone ComX (PubMed:25855042, PubMed:29665236). Acts by catalyzing the transfer of a farnesyl group on the ComX pheromone (PubMed:25855042, PubMed:29665236). In vitro, can also catalyze the farnesylation of single tryptophan and tryptophan derivatives (PubMed:29665236).</text>
</comment>
<comment type="catalytic activity">
    <reaction evidence="4">
        <text>L-tryptophyl-[protein] + (2E,6E)-farnesyl diphosphate = (2S,3R)-3-farnesyl-2,3-dihydro-2,N(alpha)-cyclo-L-tryptophyl-[protein] + diphosphate</text>
        <dbReference type="Rhea" id="RHEA:68384"/>
        <dbReference type="Rhea" id="RHEA-COMP:15365"/>
        <dbReference type="Rhea" id="RHEA-COMP:17488"/>
        <dbReference type="ChEBI" id="CHEBI:29954"/>
        <dbReference type="ChEBI" id="CHEBI:33019"/>
        <dbReference type="ChEBI" id="CHEBI:175763"/>
        <dbReference type="ChEBI" id="CHEBI:177368"/>
    </reaction>
    <physiologicalReaction direction="left-to-right" evidence="4">
        <dbReference type="Rhea" id="RHEA:68385"/>
    </physiologicalReaction>
</comment>
<comment type="cofactor">
    <cofactor evidence="4">
        <name>Mg(2+)</name>
        <dbReference type="ChEBI" id="CHEBI:18420"/>
    </cofactor>
    <text evidence="2">Binds 2 Mg(2+) ions per subunit.</text>
</comment>
<comment type="biophysicochemical properties">
    <kinetics>
        <KM evidence="4">0.348 mM for [53-73]ComX</KM>
        <KM evidence="4">0.691 mM for Fmoc-Trp-OH</KM>
        <text evidence="4">kcat is 0.18 sec(-1) with [53-73]ComX as substrate.</text>
    </kinetics>
</comment>
<comment type="subcellular location">
    <subcellularLocation>
        <location evidence="1">Cell membrane</location>
    </subcellularLocation>
</comment>
<comment type="similarity">
    <text evidence="6">Belongs to the FPP/GGPP synthase family.</text>
</comment>
<sequence length="315" mass="36132">MSHLVKWNGRGEVVIEQICLDSVRIKEKMKEIVDENILNEDLKVKLISFIKEKKQFSFAELAYYHYIAFDGKNDKAIELLASGIELLILSADIFDDIEDKDNLQASWMKLDPSIATNAATALYTLSLQVIGSVSNHPKLLSLTLQYSLQSLQGQHVDLNLTASSESEYIEMIKLKSGSLVTLPSILGVYLATGEYNETVEEYSRYLGIVEQIANDHYGLYYPNYNDFKTRHTLAFNYLKNKFNQSSIDLLNFYAQENHMINNLEDLKGKLRESGVIQYLNVIKNLAVENFKESFKKLRLDEQRKNKLLIQLLRGI</sequence>
<protein>
    <recommendedName>
        <fullName evidence="6">Tryptophan prenyltransferase ComQ</fullName>
        <ecNumber evidence="4">2.5.1.-</ecNumber>
    </recommendedName>
    <alternativeName>
        <fullName evidence="5">ComX-tryptophan prenyltransferase</fullName>
    </alternativeName>
</protein>
<evidence type="ECO:0000250" key="1">
    <source>
        <dbReference type="UniProtKB" id="P0DV09"/>
    </source>
</evidence>
<evidence type="ECO:0000250" key="2">
    <source>
        <dbReference type="UniProtKB" id="P14324"/>
    </source>
</evidence>
<evidence type="ECO:0000269" key="3">
    <source>
    </source>
</evidence>
<evidence type="ECO:0000269" key="4">
    <source>
    </source>
</evidence>
<evidence type="ECO:0000303" key="5">
    <source>
    </source>
</evidence>
<evidence type="ECO:0000305" key="6"/>
<evidence type="ECO:0000312" key="7">
    <source>
        <dbReference type="EMBL" id="BAI86695.2"/>
    </source>
</evidence>
<name>COMQ_BACNB</name>
<accession>D4G0R4</accession>
<dbReference type="EC" id="2.5.1.-" evidence="4"/>
<dbReference type="EMBL" id="AP011541">
    <property type="protein sequence ID" value="BAI86695.2"/>
    <property type="molecule type" value="Genomic_DNA"/>
</dbReference>
<dbReference type="SMR" id="D4G0R4"/>
<dbReference type="STRING" id="86029.AWV81_16295"/>
<dbReference type="KEGG" id="bso:BSNT_09634"/>
<dbReference type="HOGENOM" id="CLU_079583_0_0_9"/>
<dbReference type="GO" id="GO:0005886">
    <property type="term" value="C:plasma membrane"/>
    <property type="evidence" value="ECO:0007669"/>
    <property type="project" value="UniProtKB-SubCell"/>
</dbReference>
<dbReference type="GO" id="GO:0046872">
    <property type="term" value="F:metal ion binding"/>
    <property type="evidence" value="ECO:0007669"/>
    <property type="project" value="UniProtKB-KW"/>
</dbReference>
<dbReference type="GO" id="GO:0004659">
    <property type="term" value="F:prenyltransferase activity"/>
    <property type="evidence" value="ECO:0007669"/>
    <property type="project" value="UniProtKB-KW"/>
</dbReference>
<dbReference type="GO" id="GO:0030420">
    <property type="term" value="P:establishment of competence for transformation"/>
    <property type="evidence" value="ECO:0007669"/>
    <property type="project" value="UniProtKB-KW"/>
</dbReference>
<dbReference type="GO" id="GO:0008299">
    <property type="term" value="P:isoprenoid biosynthetic process"/>
    <property type="evidence" value="ECO:0007669"/>
    <property type="project" value="InterPro"/>
</dbReference>
<dbReference type="CDD" id="cd00867">
    <property type="entry name" value="Trans_IPPS"/>
    <property type="match status" value="1"/>
</dbReference>
<dbReference type="Gene3D" id="1.10.600.10">
    <property type="entry name" value="Farnesyl Diphosphate Synthase"/>
    <property type="match status" value="1"/>
</dbReference>
<dbReference type="InterPro" id="IPR033965">
    <property type="entry name" value="ComQ"/>
</dbReference>
<dbReference type="InterPro" id="IPR008949">
    <property type="entry name" value="Isoprenoid_synthase_dom_sf"/>
</dbReference>
<dbReference type="InterPro" id="IPR000092">
    <property type="entry name" value="Polyprenyl_synt"/>
</dbReference>
<dbReference type="Pfam" id="PF00348">
    <property type="entry name" value="polyprenyl_synt"/>
    <property type="match status" value="1"/>
</dbReference>
<dbReference type="SFLD" id="SFLDG01211">
    <property type="entry name" value="Competence_Regulatory_Protein"/>
    <property type="match status" value="1"/>
</dbReference>
<dbReference type="SFLD" id="SFLDS00005">
    <property type="entry name" value="Isoprenoid_Synthase_Type_I"/>
    <property type="match status" value="1"/>
</dbReference>
<dbReference type="SUPFAM" id="SSF48576">
    <property type="entry name" value="Terpenoid synthases"/>
    <property type="match status" value="1"/>
</dbReference>
<proteinExistence type="evidence at protein level"/>
<gene>
    <name evidence="5" type="primary">comQ</name>
    <name evidence="7" type="ORF">BSNT_09634</name>
</gene>
<organism>
    <name type="scientific">Bacillus subtilis subsp. natto (strain BEST195)</name>
    <dbReference type="NCBI Taxonomy" id="645657"/>
    <lineage>
        <taxon>Bacteria</taxon>
        <taxon>Bacillati</taxon>
        <taxon>Bacillota</taxon>
        <taxon>Bacilli</taxon>
        <taxon>Bacillales</taxon>
        <taxon>Bacillaceae</taxon>
        <taxon>Bacillus</taxon>
    </lineage>
</organism>